<comment type="subunit">
    <text evidence="1">Part of the 50S ribosomal subunit.</text>
</comment>
<comment type="similarity">
    <text evidence="1">Belongs to the universal ribosomal protein uL30 family.</text>
</comment>
<proteinExistence type="inferred from homology"/>
<sequence>MADVKITQVRSTIGARWKQRESLKTLGLRKIRQTVVREDNAQTRGLLQVVRHLVTVEDVK</sequence>
<keyword id="KW-1185">Reference proteome</keyword>
<keyword id="KW-0687">Ribonucleoprotein</keyword>
<keyword id="KW-0689">Ribosomal protein</keyword>
<evidence type="ECO:0000255" key="1">
    <source>
        <dbReference type="HAMAP-Rule" id="MF_01371"/>
    </source>
</evidence>
<evidence type="ECO:0000305" key="2"/>
<accession>B1MGC4</accession>
<gene>
    <name evidence="1" type="primary">rpmD</name>
    <name type="ordered locus">MAB_3794c</name>
</gene>
<feature type="chain" id="PRO_1000144699" description="Large ribosomal subunit protein uL30">
    <location>
        <begin position="1"/>
        <end position="60"/>
    </location>
</feature>
<dbReference type="EMBL" id="CU458896">
    <property type="protein sequence ID" value="CAM63869.1"/>
    <property type="molecule type" value="Genomic_DNA"/>
</dbReference>
<dbReference type="RefSeq" id="WP_005055719.1">
    <property type="nucleotide sequence ID" value="NZ_MLCG01000001.1"/>
</dbReference>
<dbReference type="SMR" id="B1MGC4"/>
<dbReference type="GeneID" id="93380734"/>
<dbReference type="KEGG" id="mab:MAB_3794c"/>
<dbReference type="Proteomes" id="UP000007137">
    <property type="component" value="Chromosome"/>
</dbReference>
<dbReference type="GO" id="GO:0022625">
    <property type="term" value="C:cytosolic large ribosomal subunit"/>
    <property type="evidence" value="ECO:0007669"/>
    <property type="project" value="TreeGrafter"/>
</dbReference>
<dbReference type="GO" id="GO:0003735">
    <property type="term" value="F:structural constituent of ribosome"/>
    <property type="evidence" value="ECO:0007669"/>
    <property type="project" value="InterPro"/>
</dbReference>
<dbReference type="GO" id="GO:0006412">
    <property type="term" value="P:translation"/>
    <property type="evidence" value="ECO:0007669"/>
    <property type="project" value="UniProtKB-UniRule"/>
</dbReference>
<dbReference type="CDD" id="cd01658">
    <property type="entry name" value="Ribosomal_L30"/>
    <property type="match status" value="1"/>
</dbReference>
<dbReference type="FunFam" id="3.30.1390.20:FF:000001">
    <property type="entry name" value="50S ribosomal protein L30"/>
    <property type="match status" value="1"/>
</dbReference>
<dbReference type="Gene3D" id="3.30.1390.20">
    <property type="entry name" value="Ribosomal protein L30, ferredoxin-like fold domain"/>
    <property type="match status" value="1"/>
</dbReference>
<dbReference type="HAMAP" id="MF_01371_B">
    <property type="entry name" value="Ribosomal_uL30_B"/>
    <property type="match status" value="1"/>
</dbReference>
<dbReference type="InterPro" id="IPR036919">
    <property type="entry name" value="Ribo_uL30_ferredoxin-like_sf"/>
</dbReference>
<dbReference type="InterPro" id="IPR005996">
    <property type="entry name" value="Ribosomal_uL30_bac-type"/>
</dbReference>
<dbReference type="InterPro" id="IPR018038">
    <property type="entry name" value="Ribosomal_uL30_CS"/>
</dbReference>
<dbReference type="InterPro" id="IPR016082">
    <property type="entry name" value="Ribosomal_uL30_ferredoxin-like"/>
</dbReference>
<dbReference type="NCBIfam" id="TIGR01308">
    <property type="entry name" value="rpmD_bact"/>
    <property type="match status" value="1"/>
</dbReference>
<dbReference type="PANTHER" id="PTHR15892:SF2">
    <property type="entry name" value="LARGE RIBOSOMAL SUBUNIT PROTEIN UL30M"/>
    <property type="match status" value="1"/>
</dbReference>
<dbReference type="PANTHER" id="PTHR15892">
    <property type="entry name" value="MITOCHONDRIAL RIBOSOMAL PROTEIN L30"/>
    <property type="match status" value="1"/>
</dbReference>
<dbReference type="Pfam" id="PF00327">
    <property type="entry name" value="Ribosomal_L30"/>
    <property type="match status" value="1"/>
</dbReference>
<dbReference type="PIRSF" id="PIRSF002211">
    <property type="entry name" value="Ribosomal_L30_bac-type"/>
    <property type="match status" value="1"/>
</dbReference>
<dbReference type="SUPFAM" id="SSF55129">
    <property type="entry name" value="Ribosomal protein L30p/L7e"/>
    <property type="match status" value="1"/>
</dbReference>
<dbReference type="PROSITE" id="PS00634">
    <property type="entry name" value="RIBOSOMAL_L30"/>
    <property type="match status" value="1"/>
</dbReference>
<organism>
    <name type="scientific">Mycobacteroides abscessus (strain ATCC 19977 / DSM 44196 / CCUG 20993 / CIP 104536 / JCM 13569 / NCTC 13031 / TMC 1543 / L948)</name>
    <name type="common">Mycobacterium abscessus</name>
    <dbReference type="NCBI Taxonomy" id="561007"/>
    <lineage>
        <taxon>Bacteria</taxon>
        <taxon>Bacillati</taxon>
        <taxon>Actinomycetota</taxon>
        <taxon>Actinomycetes</taxon>
        <taxon>Mycobacteriales</taxon>
        <taxon>Mycobacteriaceae</taxon>
        <taxon>Mycobacteroides</taxon>
        <taxon>Mycobacteroides abscessus</taxon>
    </lineage>
</organism>
<protein>
    <recommendedName>
        <fullName evidence="1">Large ribosomal subunit protein uL30</fullName>
    </recommendedName>
    <alternativeName>
        <fullName evidence="2">50S ribosomal protein L30</fullName>
    </alternativeName>
</protein>
<reference key="1">
    <citation type="journal article" date="2009" name="PLoS ONE">
        <title>Non mycobacterial virulence genes in the genome of the emerging pathogen Mycobacterium abscessus.</title>
        <authorList>
            <person name="Ripoll F."/>
            <person name="Pasek S."/>
            <person name="Schenowitz C."/>
            <person name="Dossat C."/>
            <person name="Barbe V."/>
            <person name="Rottman M."/>
            <person name="Macheras E."/>
            <person name="Heym B."/>
            <person name="Herrmann J.L."/>
            <person name="Daffe M."/>
            <person name="Brosch R."/>
            <person name="Risler J.L."/>
            <person name="Gaillard J.L."/>
        </authorList>
    </citation>
    <scope>NUCLEOTIDE SEQUENCE [LARGE SCALE GENOMIC DNA]</scope>
    <source>
        <strain>ATCC 19977 / DSM 44196 / CCUG 20993 / CIP 104536 / JCM 13569 / NCTC 13031 / TMC 1543 / L948</strain>
    </source>
</reference>
<name>RL30_MYCA9</name>